<dbReference type="EMBL" id="AE015925">
    <property type="protein sequence ID" value="AAP05372.1"/>
    <property type="molecule type" value="Genomic_DNA"/>
</dbReference>
<dbReference type="RefSeq" id="WP_011006587.1">
    <property type="nucleotide sequence ID" value="NC_003361.3"/>
</dbReference>
<dbReference type="SMR" id="Q822P9"/>
<dbReference type="STRING" id="227941.CCA_00630"/>
<dbReference type="KEGG" id="cca:CCA_00630"/>
<dbReference type="eggNOG" id="COG1678">
    <property type="taxonomic scope" value="Bacteria"/>
</dbReference>
<dbReference type="HOGENOM" id="CLU_057596_2_1_0"/>
<dbReference type="OrthoDB" id="9807486at2"/>
<dbReference type="Proteomes" id="UP000002193">
    <property type="component" value="Chromosome"/>
</dbReference>
<dbReference type="GO" id="GO:0005829">
    <property type="term" value="C:cytosol"/>
    <property type="evidence" value="ECO:0007669"/>
    <property type="project" value="TreeGrafter"/>
</dbReference>
<dbReference type="Gene3D" id="3.40.1740.10">
    <property type="entry name" value="VC0467-like"/>
    <property type="match status" value="1"/>
</dbReference>
<dbReference type="HAMAP" id="MF_00758">
    <property type="entry name" value="UPF0301"/>
    <property type="match status" value="1"/>
</dbReference>
<dbReference type="InterPro" id="IPR003774">
    <property type="entry name" value="AlgH-like"/>
</dbReference>
<dbReference type="NCBIfam" id="NF001271">
    <property type="entry name" value="PRK00228.2-3"/>
    <property type="match status" value="1"/>
</dbReference>
<dbReference type="PANTHER" id="PTHR30327">
    <property type="entry name" value="UNCHARACTERIZED PROTEIN YQGE"/>
    <property type="match status" value="1"/>
</dbReference>
<dbReference type="PANTHER" id="PTHR30327:SF1">
    <property type="entry name" value="UPF0301 PROTEIN YQGE"/>
    <property type="match status" value="1"/>
</dbReference>
<dbReference type="Pfam" id="PF02622">
    <property type="entry name" value="DUF179"/>
    <property type="match status" value="1"/>
</dbReference>
<dbReference type="SUPFAM" id="SSF143456">
    <property type="entry name" value="VC0467-like"/>
    <property type="match status" value="1"/>
</dbReference>
<comment type="similarity">
    <text evidence="1">Belongs to the UPF0301 (AlgH) family.</text>
</comment>
<reference key="1">
    <citation type="journal article" date="2003" name="Nucleic Acids Res.">
        <title>Genome sequence of Chlamydophila caviae (Chlamydia psittaci GPIC): examining the role of niche-specific genes in the evolution of the Chlamydiaceae.</title>
        <authorList>
            <person name="Read T.D."/>
            <person name="Myers G.S.A."/>
            <person name="Brunham R.C."/>
            <person name="Nelson W.C."/>
            <person name="Paulsen I.T."/>
            <person name="Heidelberg J.F."/>
            <person name="Holtzapple E.K."/>
            <person name="Khouri H.M."/>
            <person name="Federova N.B."/>
            <person name="Carty H.A."/>
            <person name="Umayam L.A."/>
            <person name="Haft D.H."/>
            <person name="Peterson J.D."/>
            <person name="Beanan M.J."/>
            <person name="White O."/>
            <person name="Salzberg S.L."/>
            <person name="Hsia R.-C."/>
            <person name="McClarty G."/>
            <person name="Rank R.G."/>
            <person name="Bavoil P.M."/>
            <person name="Fraser C.M."/>
        </authorList>
    </citation>
    <scope>NUCLEOTIDE SEQUENCE [LARGE SCALE GENOMIC DNA]</scope>
    <source>
        <strain>ATCC VR-813 / DSM 19441 / 03DC25 / GPIC</strain>
    </source>
</reference>
<gene>
    <name type="ordered locus">CCA_00630</name>
</gene>
<proteinExistence type="inferred from homology"/>
<sequence>MAKIPYAILEKGSLLLASPDTDQGVFARSVILLCEHSLNGSFGLILNKTLGLEISDDIFTFDKVSNNNIRFCMGGPLQANQMMLLHSCSEISEQTLEICPSVYLGGDLSFLQEIAASESGPTINLCFGYSGWQAGQLEKEFLEGNWFLAPASYEYVFSDNPDNLWSRILKDLGGKYASLSTVPENLLLN</sequence>
<accession>Q822P9</accession>
<name>Y630_CHLCV</name>
<organism>
    <name type="scientific">Chlamydia caviae (strain ATCC VR-813 / DSM 19441 / 03DC25 / GPIC)</name>
    <name type="common">Chlamydophila caviae</name>
    <dbReference type="NCBI Taxonomy" id="227941"/>
    <lineage>
        <taxon>Bacteria</taxon>
        <taxon>Pseudomonadati</taxon>
        <taxon>Chlamydiota</taxon>
        <taxon>Chlamydiia</taxon>
        <taxon>Chlamydiales</taxon>
        <taxon>Chlamydiaceae</taxon>
        <taxon>Chlamydia/Chlamydophila group</taxon>
        <taxon>Chlamydia</taxon>
    </lineage>
</organism>
<feature type="chain" id="PRO_0000214315" description="UPF0301 protein CCA_00630">
    <location>
        <begin position="1"/>
        <end position="189"/>
    </location>
</feature>
<protein>
    <recommendedName>
        <fullName evidence="1">UPF0301 protein CCA_00630</fullName>
    </recommendedName>
</protein>
<evidence type="ECO:0000255" key="1">
    <source>
        <dbReference type="HAMAP-Rule" id="MF_00758"/>
    </source>
</evidence>